<keyword id="KW-0143">Chaperone</keyword>
<keyword id="KW-0963">Cytoplasm</keyword>
<keyword id="KW-1015">Disulfide bond</keyword>
<keyword id="KW-0676">Redox-active center</keyword>
<keyword id="KW-0862">Zinc</keyword>
<evidence type="ECO:0000255" key="1">
    <source>
        <dbReference type="HAMAP-Rule" id="MF_00117"/>
    </source>
</evidence>
<organism>
    <name type="scientific">Histophilus somni (strain 2336)</name>
    <name type="common">Haemophilus somnus</name>
    <dbReference type="NCBI Taxonomy" id="228400"/>
    <lineage>
        <taxon>Bacteria</taxon>
        <taxon>Pseudomonadati</taxon>
        <taxon>Pseudomonadota</taxon>
        <taxon>Gammaproteobacteria</taxon>
        <taxon>Pasteurellales</taxon>
        <taxon>Pasteurellaceae</taxon>
        <taxon>Histophilus</taxon>
    </lineage>
</organism>
<protein>
    <recommendedName>
        <fullName evidence="1">33 kDa chaperonin</fullName>
    </recommendedName>
    <alternativeName>
        <fullName evidence="1">Heat shock protein 33 homolog</fullName>
        <shortName evidence="1">HSP33</shortName>
    </alternativeName>
</protein>
<sequence>MIYQTDNDKLYRYLFKDRAVRGEWVRLNKTFTDTLNSHEYPRIVRNLLGEMMVATNLLTATLKFKGNITIQIQGNGPLKLLLVNGSDSQQIRALARLQDDVYDDITLSELVGNGILVITIAPTNGERYQGVIALDKPTIAECLEDYFIRSEQLQTQLLIRSGEYEGKPVAAGLLLQIMPDGTGSQEDFEHLATLAATVKNEELFGLTAEELLYRLYHEETVEIYPPSAVEFHCGCSLERSGSALLLISDDEIENILTEHGGSIDMQCECCGTHYFFDKKTIEKLKA</sequence>
<gene>
    <name evidence="1" type="primary">hslO</name>
    <name type="ordered locus">HSM_1810</name>
</gene>
<accession>B0UWC7</accession>
<proteinExistence type="inferred from homology"/>
<feature type="chain" id="PRO_1000076082" description="33 kDa chaperonin">
    <location>
        <begin position="1"/>
        <end position="286"/>
    </location>
</feature>
<feature type="disulfide bond" description="Redox-active" evidence="1">
    <location>
        <begin position="233"/>
        <end position="235"/>
    </location>
</feature>
<feature type="disulfide bond" description="Redox-active" evidence="1">
    <location>
        <begin position="267"/>
        <end position="270"/>
    </location>
</feature>
<reference key="1">
    <citation type="submission" date="2008-02" db="EMBL/GenBank/DDBJ databases">
        <title>Complete sequence of Haemophilus somnus 2336.</title>
        <authorList>
            <consortium name="US DOE Joint Genome Institute"/>
            <person name="Siddaramappa S."/>
            <person name="Duncan A.J."/>
            <person name="Challacombe J.F."/>
            <person name="Rainey D."/>
            <person name="Gillaspy A.F."/>
            <person name="Carson M."/>
            <person name="Gipson J."/>
            <person name="Gipson M."/>
            <person name="Bruce D."/>
            <person name="Detter J.C."/>
            <person name="Han C.S."/>
            <person name="Land M."/>
            <person name="Tapia R."/>
            <person name="Thompson L.S."/>
            <person name="Orvis J."/>
            <person name="Zaitshik J."/>
            <person name="Barnes G."/>
            <person name="Brettin T.S."/>
            <person name="Dyer D.W."/>
            <person name="Inzana T.J."/>
        </authorList>
    </citation>
    <scope>NUCLEOTIDE SEQUENCE [LARGE SCALE GENOMIC DNA]</scope>
    <source>
        <strain>2336</strain>
    </source>
</reference>
<dbReference type="EMBL" id="CP000947">
    <property type="protein sequence ID" value="ACA31597.1"/>
    <property type="molecule type" value="Genomic_DNA"/>
</dbReference>
<dbReference type="RefSeq" id="WP_012340908.1">
    <property type="nucleotide sequence ID" value="NC_010519.1"/>
</dbReference>
<dbReference type="SMR" id="B0UWC7"/>
<dbReference type="STRING" id="228400.HSM_1810"/>
<dbReference type="GeneID" id="31488118"/>
<dbReference type="KEGG" id="hsm:HSM_1810"/>
<dbReference type="HOGENOM" id="CLU_054493_0_0_6"/>
<dbReference type="GO" id="GO:0005737">
    <property type="term" value="C:cytoplasm"/>
    <property type="evidence" value="ECO:0007669"/>
    <property type="project" value="UniProtKB-SubCell"/>
</dbReference>
<dbReference type="GO" id="GO:0044183">
    <property type="term" value="F:protein folding chaperone"/>
    <property type="evidence" value="ECO:0007669"/>
    <property type="project" value="TreeGrafter"/>
</dbReference>
<dbReference type="GO" id="GO:0051082">
    <property type="term" value="F:unfolded protein binding"/>
    <property type="evidence" value="ECO:0007669"/>
    <property type="project" value="UniProtKB-UniRule"/>
</dbReference>
<dbReference type="GO" id="GO:0042026">
    <property type="term" value="P:protein refolding"/>
    <property type="evidence" value="ECO:0007669"/>
    <property type="project" value="TreeGrafter"/>
</dbReference>
<dbReference type="CDD" id="cd00498">
    <property type="entry name" value="Hsp33"/>
    <property type="match status" value="1"/>
</dbReference>
<dbReference type="Gene3D" id="1.10.287.480">
    <property type="entry name" value="helix hairpin bin"/>
    <property type="match status" value="1"/>
</dbReference>
<dbReference type="Gene3D" id="3.55.30.10">
    <property type="entry name" value="Hsp33 domain"/>
    <property type="match status" value="1"/>
</dbReference>
<dbReference type="Gene3D" id="3.90.1280.10">
    <property type="entry name" value="HSP33 redox switch-like"/>
    <property type="match status" value="1"/>
</dbReference>
<dbReference type="HAMAP" id="MF_00117">
    <property type="entry name" value="HslO"/>
    <property type="match status" value="1"/>
</dbReference>
<dbReference type="InterPro" id="IPR000397">
    <property type="entry name" value="Heat_shock_Hsp33"/>
</dbReference>
<dbReference type="InterPro" id="IPR016154">
    <property type="entry name" value="Heat_shock_Hsp33_C"/>
</dbReference>
<dbReference type="InterPro" id="IPR016153">
    <property type="entry name" value="Heat_shock_Hsp33_N"/>
</dbReference>
<dbReference type="InterPro" id="IPR023212">
    <property type="entry name" value="Hsp33_helix_hairpin_bin_dom_sf"/>
</dbReference>
<dbReference type="NCBIfam" id="NF001033">
    <property type="entry name" value="PRK00114.1"/>
    <property type="match status" value="1"/>
</dbReference>
<dbReference type="PANTHER" id="PTHR30111">
    <property type="entry name" value="33 KDA CHAPERONIN"/>
    <property type="match status" value="1"/>
</dbReference>
<dbReference type="PANTHER" id="PTHR30111:SF1">
    <property type="entry name" value="33 KDA CHAPERONIN"/>
    <property type="match status" value="1"/>
</dbReference>
<dbReference type="Pfam" id="PF01430">
    <property type="entry name" value="HSP33"/>
    <property type="match status" value="1"/>
</dbReference>
<dbReference type="PIRSF" id="PIRSF005261">
    <property type="entry name" value="Heat_shock_Hsp33"/>
    <property type="match status" value="1"/>
</dbReference>
<dbReference type="SUPFAM" id="SSF64397">
    <property type="entry name" value="Hsp33 domain"/>
    <property type="match status" value="1"/>
</dbReference>
<dbReference type="SUPFAM" id="SSF118352">
    <property type="entry name" value="HSP33 redox switch-like"/>
    <property type="match status" value="1"/>
</dbReference>
<comment type="function">
    <text evidence="1">Redox regulated molecular chaperone. Protects both thermally unfolding and oxidatively damaged proteins from irreversible aggregation. Plays an important role in the bacterial defense system toward oxidative stress.</text>
</comment>
<comment type="subcellular location">
    <subcellularLocation>
        <location evidence="1">Cytoplasm</location>
    </subcellularLocation>
</comment>
<comment type="PTM">
    <text evidence="1">Under oxidizing conditions two disulfide bonds are formed involving the reactive cysteines. Under reducing conditions zinc is bound to the reactive cysteines and the protein is inactive.</text>
</comment>
<comment type="similarity">
    <text evidence="1">Belongs to the HSP33 family.</text>
</comment>
<name>HSLO_HISS2</name>